<accession>P01551</accession>
<evidence type="ECO:0000269" key="1">
    <source>
    </source>
</evidence>
<evidence type="ECO:0000269" key="2">
    <source ref="3"/>
</evidence>
<evidence type="ECO:0000305" key="3"/>
<evidence type="ECO:0007829" key="4">
    <source>
        <dbReference type="PDB" id="1ACX"/>
    </source>
</evidence>
<dbReference type="EMBL" id="D11457">
    <property type="protein sequence ID" value="BAA02014.1"/>
    <property type="molecule type" value="Genomic_DNA"/>
</dbReference>
<dbReference type="PDB" id="1ACX">
    <property type="method" value="X-ray"/>
    <property type="resolution" value="2.00 A"/>
    <property type="chains" value="A=34-143"/>
</dbReference>
<dbReference type="PDBsum" id="1ACX"/>
<dbReference type="BMRB" id="P01551"/>
<dbReference type="SMR" id="P01551"/>
<dbReference type="EvolutionaryTrace" id="P01551"/>
<dbReference type="GO" id="GO:0003677">
    <property type="term" value="F:DNA binding"/>
    <property type="evidence" value="ECO:0007669"/>
    <property type="project" value="UniProtKB-KW"/>
</dbReference>
<dbReference type="GO" id="GO:0042742">
    <property type="term" value="P:defense response to bacterium"/>
    <property type="evidence" value="ECO:0007669"/>
    <property type="project" value="UniProtKB-KW"/>
</dbReference>
<dbReference type="Gene3D" id="2.60.40.230">
    <property type="entry name" value="Neocarzinostatin-like"/>
    <property type="match status" value="1"/>
</dbReference>
<dbReference type="InterPro" id="IPR027273">
    <property type="entry name" value="Neocarzinostatin-like"/>
</dbReference>
<dbReference type="InterPro" id="IPR002186">
    <property type="entry name" value="Neocarzinostatin_fam"/>
</dbReference>
<dbReference type="NCBIfam" id="NF040680">
    <property type="entry name" value="chromo_anti"/>
    <property type="match status" value="1"/>
</dbReference>
<dbReference type="Pfam" id="PF00960">
    <property type="entry name" value="Neocarzinostat"/>
    <property type="match status" value="1"/>
</dbReference>
<dbReference type="PRINTS" id="PR01885">
    <property type="entry name" value="MACROMOMYCIN"/>
</dbReference>
<dbReference type="SUPFAM" id="SSF49319">
    <property type="entry name" value="Actinoxanthin-like"/>
    <property type="match status" value="1"/>
</dbReference>
<protein>
    <recommendedName>
        <fullName>Actinoxanthin</fullName>
        <shortName>AXN</shortName>
    </recommendedName>
</protein>
<feature type="signal peptide" evidence="1">
    <location>
        <begin position="1"/>
        <end position="33"/>
    </location>
</feature>
<feature type="chain" id="PRO_0000019458" description="Actinoxanthin">
    <location>
        <begin position="34"/>
        <end position="143"/>
    </location>
</feature>
<feature type="disulfide bond" evidence="2">
    <location>
        <begin position="69"/>
        <end position="78"/>
    </location>
</feature>
<feature type="disulfide bond" evidence="2">
    <location>
        <begin position="119"/>
        <end position="124"/>
    </location>
</feature>
<feature type="sequence conflict" description="In Ref. 2; AA sequence." evidence="3" ref="2">
    <location>
        <begin position="54"/>
        <end position="55"/>
    </location>
</feature>
<feature type="sequence conflict" description="In Ref. 2; AA sequence." evidence="3" ref="2">
    <location>
        <position position="100"/>
    </location>
</feature>
<feature type="sequence conflict" description="In Ref. 2; AA sequence." evidence="3" ref="2">
    <original>S</original>
    <variation>E</variation>
    <location>
        <position position="107"/>
    </location>
</feature>
<feature type="sequence conflict" description="In Ref. 2; AA sequence." evidence="3" ref="2">
    <original>E</original>
    <variation>S</variation>
    <location>
        <position position="110"/>
    </location>
</feature>
<feature type="sequence conflict" description="In Ref. 2; AA sequence." evidence="3" ref="2">
    <original>D</original>
    <variation>N</variation>
    <location>
        <position position="134"/>
    </location>
</feature>
<feature type="strand" evidence="4">
    <location>
        <begin position="36"/>
        <end position="40"/>
    </location>
</feature>
<feature type="strand" evidence="4">
    <location>
        <begin position="50"/>
        <end position="55"/>
    </location>
</feature>
<feature type="strand" evidence="4">
    <location>
        <begin position="62"/>
        <end position="69"/>
    </location>
</feature>
<feature type="turn" evidence="4">
    <location>
        <begin position="80"/>
        <end position="82"/>
    </location>
</feature>
<feature type="strand" evidence="4">
    <location>
        <begin position="85"/>
        <end position="87"/>
    </location>
</feature>
<feature type="strand" evidence="4">
    <location>
        <begin position="95"/>
        <end position="99"/>
    </location>
</feature>
<feature type="strand" evidence="4">
    <location>
        <begin position="102"/>
        <end position="107"/>
    </location>
</feature>
<feature type="strand" evidence="4">
    <location>
        <begin position="113"/>
        <end position="118"/>
    </location>
</feature>
<feature type="turn" evidence="4">
    <location>
        <begin position="119"/>
        <end position="121"/>
    </location>
</feature>
<feature type="strand" evidence="4">
    <location>
        <begin position="125"/>
        <end position="129"/>
    </location>
</feature>
<keyword id="KW-0002">3D-structure</keyword>
<keyword id="KW-0044">Antibiotic</keyword>
<keyword id="KW-0929">Antimicrobial</keyword>
<keyword id="KW-0903">Direct protein sequencing</keyword>
<keyword id="KW-1015">Disulfide bond</keyword>
<keyword id="KW-0238">DNA-binding</keyword>
<keyword id="KW-0732">Signal</keyword>
<gene>
    <name type="primary">axnA</name>
</gene>
<comment type="function">
    <text>Binds non-covalently to a chromophore which is the cytotoxic and mutagenic component of the antibiotic. The chromophore binds to DNA as a weak intercalator and causes single- and double-strand breaks.</text>
</comment>
<comment type="similarity">
    <text evidence="3">Belongs to the neocarzinostatin family.</text>
</comment>
<sequence>MSLRHMSRRASRFGVVAVASIGLAAAAQSVAFAAPAFSVSPASGLSDGQSVSVSVSGAAAGETYYIAQCAPVGGQDACNPATATSFTTDASGAASFSFVVRKSYAGSTPEGTPVGSVDCATDACNLGAGNSGLDLGHVALTFG</sequence>
<reference key="1">
    <citation type="journal article" date="1993" name="J. Antibiot.">
        <title>The amino acid sequence of actinoxanthin apoprotein deduced from the base sequence of the gene.</title>
        <authorList>
            <person name="Sakata N."/>
            <person name="Mase S."/>
            <person name="Ikeno S."/>
            <person name="Hori M."/>
            <person name="Otani T."/>
        </authorList>
    </citation>
    <scope>NUCLEOTIDE SEQUENCE [GENOMIC DNA]</scope>
</reference>
<reference key="2">
    <citation type="journal article" date="1976" name="Jpn. J. Antibiot.">
        <title>Chemical studies on actinoxanthin.</title>
        <authorList>
            <person name="Khokhlov A.S."/>
            <person name="Reshetov P.D."/>
            <person name="Chupova L.A."/>
            <person name="Cherches B.Z."/>
            <person name="Zhigis L.S."/>
            <person name="Stoyachenko I.A."/>
        </authorList>
    </citation>
    <scope>PROTEIN SEQUENCE OF 34-143</scope>
</reference>
<reference key="3">
    <citation type="journal article" date="1976" name="Bioorg. Khim.">
        <title>Actinoxanthin. VII. Location of disulfide bonds.</title>
        <authorList>
            <person name="Zhigis L.S."/>
            <person name="Stoyachenko I.A."/>
            <person name="Cherches B.Z."/>
            <person name="Reshetov P.D."/>
            <person name="Khokhlov A.S."/>
        </authorList>
    </citation>
    <scope>DISULFIDE BONDS</scope>
</reference>
<reference key="4">
    <citation type="journal article" date="1981" name="Biopolymers">
        <title>Three-dimensional structure of actinoxanthin. III. A 4-A resolution.</title>
        <authorList>
            <person name="Pletnev V.Z."/>
            <person name="Kuzin A.P."/>
            <person name="Trakhanov S.D."/>
            <person name="Kostetsky P.V."/>
            <person name="Popovich V.A."/>
            <person name="Tsigannik I.N."/>
        </authorList>
    </citation>
    <scope>X-RAY CRYSTALLOGRAPHY (4.0 ANGSTROMS)</scope>
</reference>
<reference key="5">
    <citation type="journal article" date="1982" name="Biopolymers">
        <title>Three-dimensional structure of actinoxanthin. IV. A 2.5-A resolution.</title>
        <authorList>
            <person name="Pletnev V.Z."/>
            <person name="Kuzin A.P."/>
            <person name="Trakhanov S.D."/>
            <person name="Kostetsky P.V."/>
        </authorList>
    </citation>
    <scope>X-RAY CRYSTALLOGRAPHY (2.5 ANGSTROMS)</scope>
</reference>
<organism>
    <name type="scientific">Streptomyces globisporus</name>
    <dbReference type="NCBI Taxonomy" id="1908"/>
    <lineage>
        <taxon>Bacteria</taxon>
        <taxon>Bacillati</taxon>
        <taxon>Actinomycetota</taxon>
        <taxon>Actinomycetes</taxon>
        <taxon>Kitasatosporales</taxon>
        <taxon>Streptomycetaceae</taxon>
        <taxon>Streptomyces</taxon>
    </lineage>
</organism>
<name>ATXA_STRGL</name>
<proteinExistence type="evidence at protein level"/>